<reference key="1">
    <citation type="journal article" date="2009" name="PLoS ONE">
        <title>Complete genome sequence of Francisella tularensis subspecies holarctica FTNF002-00.</title>
        <authorList>
            <person name="Barabote R.D."/>
            <person name="Xie G."/>
            <person name="Brettin T.S."/>
            <person name="Hinrichs S.H."/>
            <person name="Fey P.D."/>
            <person name="Jay J.J."/>
            <person name="Engle J.L."/>
            <person name="Godbole S.D."/>
            <person name="Noronha J.M."/>
            <person name="Scheuermann R.H."/>
            <person name="Zhou L.W."/>
            <person name="Lion C."/>
            <person name="Dempsey M.P."/>
        </authorList>
    </citation>
    <scope>NUCLEOTIDE SEQUENCE [LARGE SCALE GENOMIC DNA]</scope>
    <source>
        <strain>FTNF002-00 / FTA</strain>
    </source>
</reference>
<organism>
    <name type="scientific">Francisella tularensis subsp. holarctica (strain FTNF002-00 / FTA)</name>
    <dbReference type="NCBI Taxonomy" id="458234"/>
    <lineage>
        <taxon>Bacteria</taxon>
        <taxon>Pseudomonadati</taxon>
        <taxon>Pseudomonadota</taxon>
        <taxon>Gammaproteobacteria</taxon>
        <taxon>Thiotrichales</taxon>
        <taxon>Francisellaceae</taxon>
        <taxon>Francisella</taxon>
    </lineage>
</organism>
<proteinExistence type="inferred from homology"/>
<name>ISPF_FRATF</name>
<evidence type="ECO:0000255" key="1">
    <source>
        <dbReference type="HAMAP-Rule" id="MF_00107"/>
    </source>
</evidence>
<feature type="chain" id="PRO_1000022837" description="2-C-methyl-D-erythritol 2,4-cyclodiphosphate synthase">
    <location>
        <begin position="1"/>
        <end position="159"/>
    </location>
</feature>
<feature type="binding site" evidence="1">
    <location>
        <begin position="10"/>
        <end position="12"/>
    </location>
    <ligand>
        <name>4-CDP-2-C-methyl-D-erythritol 2-phosphate</name>
        <dbReference type="ChEBI" id="CHEBI:57919"/>
    </ligand>
</feature>
<feature type="binding site" evidence="1">
    <location>
        <position position="10"/>
    </location>
    <ligand>
        <name>a divalent metal cation</name>
        <dbReference type="ChEBI" id="CHEBI:60240"/>
    </ligand>
</feature>
<feature type="binding site" evidence="1">
    <location>
        <position position="12"/>
    </location>
    <ligand>
        <name>a divalent metal cation</name>
        <dbReference type="ChEBI" id="CHEBI:60240"/>
    </ligand>
</feature>
<feature type="binding site" evidence="1">
    <location>
        <begin position="37"/>
        <end position="38"/>
    </location>
    <ligand>
        <name>4-CDP-2-C-methyl-D-erythritol 2-phosphate</name>
        <dbReference type="ChEBI" id="CHEBI:57919"/>
    </ligand>
</feature>
<feature type="binding site" evidence="1">
    <location>
        <position position="45"/>
    </location>
    <ligand>
        <name>a divalent metal cation</name>
        <dbReference type="ChEBI" id="CHEBI:60240"/>
    </ligand>
</feature>
<feature type="binding site" evidence="1">
    <location>
        <begin position="59"/>
        <end position="61"/>
    </location>
    <ligand>
        <name>4-CDP-2-C-methyl-D-erythritol 2-phosphate</name>
        <dbReference type="ChEBI" id="CHEBI:57919"/>
    </ligand>
</feature>
<feature type="binding site" evidence="1">
    <location>
        <begin position="64"/>
        <end position="68"/>
    </location>
    <ligand>
        <name>4-CDP-2-C-methyl-D-erythritol 2-phosphate</name>
        <dbReference type="ChEBI" id="CHEBI:57919"/>
    </ligand>
</feature>
<feature type="binding site" evidence="1">
    <location>
        <begin position="103"/>
        <end position="109"/>
    </location>
    <ligand>
        <name>4-CDP-2-C-methyl-D-erythritol 2-phosphate</name>
        <dbReference type="ChEBI" id="CHEBI:57919"/>
    </ligand>
</feature>
<feature type="binding site" evidence="1">
    <location>
        <begin position="135"/>
        <end position="138"/>
    </location>
    <ligand>
        <name>4-CDP-2-C-methyl-D-erythritol 2-phosphate</name>
        <dbReference type="ChEBI" id="CHEBI:57919"/>
    </ligand>
</feature>
<feature type="binding site" evidence="1">
    <location>
        <position position="142"/>
    </location>
    <ligand>
        <name>4-CDP-2-C-methyl-D-erythritol 2-phosphate</name>
        <dbReference type="ChEBI" id="CHEBI:57919"/>
    </ligand>
</feature>
<feature type="binding site" evidence="1">
    <location>
        <position position="145"/>
    </location>
    <ligand>
        <name>4-CDP-2-C-methyl-D-erythritol 2-phosphate</name>
        <dbReference type="ChEBI" id="CHEBI:57919"/>
    </ligand>
</feature>
<feature type="site" description="Transition state stabilizer" evidence="1">
    <location>
        <position position="37"/>
    </location>
</feature>
<feature type="site" description="Transition state stabilizer" evidence="1">
    <location>
        <position position="136"/>
    </location>
</feature>
<protein>
    <recommendedName>
        <fullName evidence="1">2-C-methyl-D-erythritol 2,4-cyclodiphosphate synthase</fullName>
        <shortName evidence="1">MECDP-synthase</shortName>
        <shortName evidence="1">MECPP-synthase</shortName>
        <shortName evidence="1">MECPS</shortName>
        <ecNumber evidence="1">4.6.1.12</ecNumber>
    </recommendedName>
</protein>
<gene>
    <name evidence="1" type="primary">ispF</name>
    <name type="ordered locus">FTA_0882</name>
</gene>
<keyword id="KW-0414">Isoprene biosynthesis</keyword>
<keyword id="KW-0456">Lyase</keyword>
<keyword id="KW-0479">Metal-binding</keyword>
<sequence>MSFRIGHGYDVHKFTSAKQNIIIGGVEIAYHLGLEAHSDGDVLIHALCDAILGALGLGDIGKHFLDTDNQFKNIDSKFFLAEIKKMLDEKQYSISNIDCTIIAQAPKMLPHIEKMRACLANILEIQISQINIKATTTERLGFIGREEGIATHVVCLLYR</sequence>
<comment type="function">
    <text evidence="1">Involved in the biosynthesis of isopentenyl diphosphate (IPP) and dimethylallyl diphosphate (DMAPP), two major building blocks of isoprenoid compounds. Catalyzes the conversion of 4-diphosphocytidyl-2-C-methyl-D-erythritol 2-phosphate (CDP-ME2P) to 2-C-methyl-D-erythritol 2,4-cyclodiphosphate (ME-CPP) with a corresponding release of cytidine 5-monophosphate (CMP).</text>
</comment>
<comment type="catalytic activity">
    <reaction evidence="1">
        <text>4-CDP-2-C-methyl-D-erythritol 2-phosphate = 2-C-methyl-D-erythritol 2,4-cyclic diphosphate + CMP</text>
        <dbReference type="Rhea" id="RHEA:23864"/>
        <dbReference type="ChEBI" id="CHEBI:57919"/>
        <dbReference type="ChEBI" id="CHEBI:58483"/>
        <dbReference type="ChEBI" id="CHEBI:60377"/>
        <dbReference type="EC" id="4.6.1.12"/>
    </reaction>
</comment>
<comment type="cofactor">
    <cofactor evidence="1">
        <name>a divalent metal cation</name>
        <dbReference type="ChEBI" id="CHEBI:60240"/>
    </cofactor>
    <text evidence="1">Binds 1 divalent metal cation per subunit.</text>
</comment>
<comment type="pathway">
    <text evidence="1">Isoprenoid biosynthesis; isopentenyl diphosphate biosynthesis via DXP pathway; isopentenyl diphosphate from 1-deoxy-D-xylulose 5-phosphate: step 4/6.</text>
</comment>
<comment type="subunit">
    <text evidence="1">Homotrimer.</text>
</comment>
<comment type="similarity">
    <text evidence="1">Belongs to the IspF family.</text>
</comment>
<accession>A7NBK5</accession>
<dbReference type="EC" id="4.6.1.12" evidence="1"/>
<dbReference type="EMBL" id="CP000803">
    <property type="protein sequence ID" value="ABU61358.1"/>
    <property type="molecule type" value="Genomic_DNA"/>
</dbReference>
<dbReference type="RefSeq" id="WP_003015413.1">
    <property type="nucleotide sequence ID" value="NC_009749.1"/>
</dbReference>
<dbReference type="SMR" id="A7NBK5"/>
<dbReference type="KEGG" id="fta:FTA_0882"/>
<dbReference type="HOGENOM" id="CLU_084630_2_0_6"/>
<dbReference type="UniPathway" id="UPA00056">
    <property type="reaction ID" value="UER00095"/>
</dbReference>
<dbReference type="GO" id="GO:0008685">
    <property type="term" value="F:2-C-methyl-D-erythritol 2,4-cyclodiphosphate synthase activity"/>
    <property type="evidence" value="ECO:0007669"/>
    <property type="project" value="UniProtKB-UniRule"/>
</dbReference>
<dbReference type="GO" id="GO:0046872">
    <property type="term" value="F:metal ion binding"/>
    <property type="evidence" value="ECO:0007669"/>
    <property type="project" value="UniProtKB-KW"/>
</dbReference>
<dbReference type="GO" id="GO:0019288">
    <property type="term" value="P:isopentenyl diphosphate biosynthetic process, methylerythritol 4-phosphate pathway"/>
    <property type="evidence" value="ECO:0007669"/>
    <property type="project" value="UniProtKB-UniRule"/>
</dbReference>
<dbReference type="GO" id="GO:0016114">
    <property type="term" value="P:terpenoid biosynthetic process"/>
    <property type="evidence" value="ECO:0007669"/>
    <property type="project" value="InterPro"/>
</dbReference>
<dbReference type="CDD" id="cd00554">
    <property type="entry name" value="MECDP_synthase"/>
    <property type="match status" value="1"/>
</dbReference>
<dbReference type="FunFam" id="3.30.1330.50:FF:000001">
    <property type="entry name" value="2-C-methyl-D-erythritol 2,4-cyclodiphosphate synthase"/>
    <property type="match status" value="1"/>
</dbReference>
<dbReference type="Gene3D" id="3.30.1330.50">
    <property type="entry name" value="2-C-methyl-D-erythritol 2,4-cyclodiphosphate synthase"/>
    <property type="match status" value="1"/>
</dbReference>
<dbReference type="HAMAP" id="MF_00107">
    <property type="entry name" value="IspF"/>
    <property type="match status" value="1"/>
</dbReference>
<dbReference type="InterPro" id="IPR003526">
    <property type="entry name" value="MECDP_synthase"/>
</dbReference>
<dbReference type="InterPro" id="IPR020555">
    <property type="entry name" value="MECDP_synthase_CS"/>
</dbReference>
<dbReference type="InterPro" id="IPR036571">
    <property type="entry name" value="MECDP_synthase_sf"/>
</dbReference>
<dbReference type="NCBIfam" id="TIGR00151">
    <property type="entry name" value="ispF"/>
    <property type="match status" value="1"/>
</dbReference>
<dbReference type="PANTHER" id="PTHR43181">
    <property type="entry name" value="2-C-METHYL-D-ERYTHRITOL 2,4-CYCLODIPHOSPHATE SYNTHASE, CHLOROPLASTIC"/>
    <property type="match status" value="1"/>
</dbReference>
<dbReference type="PANTHER" id="PTHR43181:SF1">
    <property type="entry name" value="2-C-METHYL-D-ERYTHRITOL 2,4-CYCLODIPHOSPHATE SYNTHASE, CHLOROPLASTIC"/>
    <property type="match status" value="1"/>
</dbReference>
<dbReference type="Pfam" id="PF02542">
    <property type="entry name" value="YgbB"/>
    <property type="match status" value="1"/>
</dbReference>
<dbReference type="SUPFAM" id="SSF69765">
    <property type="entry name" value="IpsF-like"/>
    <property type="match status" value="1"/>
</dbReference>
<dbReference type="PROSITE" id="PS01350">
    <property type="entry name" value="ISPF"/>
    <property type="match status" value="1"/>
</dbReference>